<accession>Q2JIJ2</accession>
<reference key="1">
    <citation type="journal article" date="2007" name="ISME J.">
        <title>Population level functional diversity in a microbial community revealed by comparative genomic and metagenomic analyses.</title>
        <authorList>
            <person name="Bhaya D."/>
            <person name="Grossman A.R."/>
            <person name="Steunou A.-S."/>
            <person name="Khuri N."/>
            <person name="Cohan F.M."/>
            <person name="Hamamura N."/>
            <person name="Melendrez M.C."/>
            <person name="Bateson M.M."/>
            <person name="Ward D.M."/>
            <person name="Heidelberg J.F."/>
        </authorList>
    </citation>
    <scope>NUCLEOTIDE SEQUENCE [LARGE SCALE GENOMIC DNA]</scope>
    <source>
        <strain>JA-2-3B'a(2-13)</strain>
    </source>
</reference>
<feature type="chain" id="PRO_0000240501" description="UPF0367 protein CYB_2632">
    <location>
        <begin position="1"/>
        <end position="89"/>
    </location>
</feature>
<feature type="region of interest" description="Disordered" evidence="2">
    <location>
        <begin position="69"/>
        <end position="89"/>
    </location>
</feature>
<protein>
    <recommendedName>
        <fullName evidence="1">UPF0367 protein CYB_2632</fullName>
    </recommendedName>
</protein>
<sequence>MYTLELLLKGNPAPIVVHQKEEEAANRAYQSIVNALQSGSPQSLELTCDRTGKKVFLLTGELCGVQMTSKSGSASPMGTRPGFLAQLQS</sequence>
<comment type="similarity">
    <text evidence="1">Belongs to the UPF0367 family.</text>
</comment>
<gene>
    <name type="ordered locus">CYB_2632</name>
</gene>
<evidence type="ECO:0000255" key="1">
    <source>
        <dbReference type="HAMAP-Rule" id="MF_01360"/>
    </source>
</evidence>
<evidence type="ECO:0000256" key="2">
    <source>
        <dbReference type="SAM" id="MobiDB-lite"/>
    </source>
</evidence>
<dbReference type="EMBL" id="CP000240">
    <property type="protein sequence ID" value="ABD03562.1"/>
    <property type="molecule type" value="Genomic_DNA"/>
</dbReference>
<dbReference type="RefSeq" id="WP_011434187.1">
    <property type="nucleotide sequence ID" value="NC_007776.1"/>
</dbReference>
<dbReference type="STRING" id="321332.CYB_2632"/>
<dbReference type="KEGG" id="cyb:CYB_2632"/>
<dbReference type="eggNOG" id="ENOG5032YB3">
    <property type="taxonomic scope" value="Bacteria"/>
</dbReference>
<dbReference type="HOGENOM" id="CLU_180777_0_0_3"/>
<dbReference type="OrthoDB" id="516864at2"/>
<dbReference type="Proteomes" id="UP000001938">
    <property type="component" value="Chromosome"/>
</dbReference>
<dbReference type="HAMAP" id="MF_01360">
    <property type="entry name" value="UPF0367"/>
    <property type="match status" value="1"/>
</dbReference>
<dbReference type="InterPro" id="IPR020885">
    <property type="entry name" value="UPF0367"/>
</dbReference>
<dbReference type="NCBIfam" id="NF010236">
    <property type="entry name" value="PRK13683.1"/>
    <property type="match status" value="1"/>
</dbReference>
<name>Y2632_SYNJB</name>
<proteinExistence type="inferred from homology"/>
<organism>
    <name type="scientific">Synechococcus sp. (strain JA-2-3B'a(2-13))</name>
    <name type="common">Cyanobacteria bacterium Yellowstone B-Prime</name>
    <dbReference type="NCBI Taxonomy" id="321332"/>
    <lineage>
        <taxon>Bacteria</taxon>
        <taxon>Bacillati</taxon>
        <taxon>Cyanobacteriota</taxon>
        <taxon>Cyanophyceae</taxon>
        <taxon>Synechococcales</taxon>
        <taxon>Synechococcaceae</taxon>
        <taxon>Synechococcus</taxon>
    </lineage>
</organism>
<keyword id="KW-1185">Reference proteome</keyword>